<evidence type="ECO:0000255" key="1">
    <source>
        <dbReference type="HAMAP-Rule" id="MF_01364"/>
    </source>
</evidence>
<evidence type="ECO:0000305" key="2"/>
<sequence length="61" mass="6956">MAKKSMIAKAARKPKFKVRAYTRCQICGRPHSVYRDFGICRVCLRKMGNEGLIPGLKKASW</sequence>
<organism>
    <name type="scientific">Campylobacter jejuni subsp. jejuni serotype O:6 (strain 81116 / NCTC 11828)</name>
    <dbReference type="NCBI Taxonomy" id="407148"/>
    <lineage>
        <taxon>Bacteria</taxon>
        <taxon>Pseudomonadati</taxon>
        <taxon>Campylobacterota</taxon>
        <taxon>Epsilonproteobacteria</taxon>
        <taxon>Campylobacterales</taxon>
        <taxon>Campylobacteraceae</taxon>
        <taxon>Campylobacter</taxon>
    </lineage>
</organism>
<protein>
    <recommendedName>
        <fullName evidence="1">Small ribosomal subunit protein uS14</fullName>
    </recommendedName>
    <alternativeName>
        <fullName evidence="2">30S ribosomal protein S14 type Z</fullName>
    </alternativeName>
</protein>
<name>RS14Z_CAMJ8</name>
<proteinExistence type="inferred from homology"/>
<reference key="1">
    <citation type="journal article" date="2007" name="J. Bacteriol.">
        <title>The complete genome sequence of Campylobacter jejuni strain 81116 (NCTC11828).</title>
        <authorList>
            <person name="Pearson B.M."/>
            <person name="Gaskin D.J.H."/>
            <person name="Segers R.P.A.M."/>
            <person name="Wells J.M."/>
            <person name="Nuijten P.J.M."/>
            <person name="van Vliet A.H.M."/>
        </authorList>
    </citation>
    <scope>NUCLEOTIDE SEQUENCE [LARGE SCALE GENOMIC DNA]</scope>
    <source>
        <strain>81116 / NCTC 11828</strain>
    </source>
</reference>
<feature type="chain" id="PRO_1000073395" description="Small ribosomal subunit protein uS14">
    <location>
        <begin position="1"/>
        <end position="61"/>
    </location>
</feature>
<feature type="binding site" evidence="1">
    <location>
        <position position="24"/>
    </location>
    <ligand>
        <name>Zn(2+)</name>
        <dbReference type="ChEBI" id="CHEBI:29105"/>
    </ligand>
</feature>
<feature type="binding site" evidence="1">
    <location>
        <position position="27"/>
    </location>
    <ligand>
        <name>Zn(2+)</name>
        <dbReference type="ChEBI" id="CHEBI:29105"/>
    </ligand>
</feature>
<feature type="binding site" evidence="1">
    <location>
        <position position="40"/>
    </location>
    <ligand>
        <name>Zn(2+)</name>
        <dbReference type="ChEBI" id="CHEBI:29105"/>
    </ligand>
</feature>
<feature type="binding site" evidence="1">
    <location>
        <position position="43"/>
    </location>
    <ligand>
        <name>Zn(2+)</name>
        <dbReference type="ChEBI" id="CHEBI:29105"/>
    </ligand>
</feature>
<keyword id="KW-0479">Metal-binding</keyword>
<keyword id="KW-0687">Ribonucleoprotein</keyword>
<keyword id="KW-0689">Ribosomal protein</keyword>
<keyword id="KW-0694">RNA-binding</keyword>
<keyword id="KW-0699">rRNA-binding</keyword>
<keyword id="KW-0862">Zinc</keyword>
<gene>
    <name evidence="1" type="primary">rpsZ</name>
    <name evidence="1" type="synonym">rpsN</name>
    <name type="ordered locus">C8J_1598</name>
</gene>
<accession>A8FP08</accession>
<comment type="function">
    <text evidence="1">Binds 16S rRNA, required for the assembly of 30S particles and may also be responsible for determining the conformation of the 16S rRNA at the A site.</text>
</comment>
<comment type="cofactor">
    <cofactor evidence="1">
        <name>Zn(2+)</name>
        <dbReference type="ChEBI" id="CHEBI:29105"/>
    </cofactor>
    <text evidence="1">Binds 1 zinc ion per subunit.</text>
</comment>
<comment type="subunit">
    <text evidence="1">Part of the 30S ribosomal subunit. Contacts proteins S3 and S10.</text>
</comment>
<comment type="similarity">
    <text evidence="1">Belongs to the universal ribosomal protein uS14 family. Zinc-binding uS14 subfamily.</text>
</comment>
<dbReference type="EMBL" id="CP000814">
    <property type="protein sequence ID" value="ABV53195.1"/>
    <property type="molecule type" value="Genomic_DNA"/>
</dbReference>
<dbReference type="RefSeq" id="WP_002851478.1">
    <property type="nucleotide sequence ID" value="NC_009839.1"/>
</dbReference>
<dbReference type="SMR" id="A8FP08"/>
<dbReference type="KEGG" id="cju:C8J_1598"/>
<dbReference type="HOGENOM" id="CLU_139869_3_0_7"/>
<dbReference type="GO" id="GO:0005737">
    <property type="term" value="C:cytoplasm"/>
    <property type="evidence" value="ECO:0007669"/>
    <property type="project" value="UniProtKB-ARBA"/>
</dbReference>
<dbReference type="GO" id="GO:0015935">
    <property type="term" value="C:small ribosomal subunit"/>
    <property type="evidence" value="ECO:0007669"/>
    <property type="project" value="TreeGrafter"/>
</dbReference>
<dbReference type="GO" id="GO:0019843">
    <property type="term" value="F:rRNA binding"/>
    <property type="evidence" value="ECO:0007669"/>
    <property type="project" value="UniProtKB-UniRule"/>
</dbReference>
<dbReference type="GO" id="GO:0003735">
    <property type="term" value="F:structural constituent of ribosome"/>
    <property type="evidence" value="ECO:0007669"/>
    <property type="project" value="InterPro"/>
</dbReference>
<dbReference type="GO" id="GO:0008270">
    <property type="term" value="F:zinc ion binding"/>
    <property type="evidence" value="ECO:0007669"/>
    <property type="project" value="UniProtKB-UniRule"/>
</dbReference>
<dbReference type="GO" id="GO:0006412">
    <property type="term" value="P:translation"/>
    <property type="evidence" value="ECO:0007669"/>
    <property type="project" value="UniProtKB-UniRule"/>
</dbReference>
<dbReference type="FunFam" id="4.10.830.10:FF:000001">
    <property type="entry name" value="30S ribosomal protein S14 type Z"/>
    <property type="match status" value="1"/>
</dbReference>
<dbReference type="Gene3D" id="4.10.830.10">
    <property type="entry name" value="30s Ribosomal Protein S14, Chain N"/>
    <property type="match status" value="1"/>
</dbReference>
<dbReference type="HAMAP" id="MF_01364_B">
    <property type="entry name" value="Ribosomal_uS14_2_B"/>
    <property type="match status" value="1"/>
</dbReference>
<dbReference type="InterPro" id="IPR001209">
    <property type="entry name" value="Ribosomal_uS14"/>
</dbReference>
<dbReference type="InterPro" id="IPR023053">
    <property type="entry name" value="Ribosomal_uS14_bact"/>
</dbReference>
<dbReference type="InterPro" id="IPR018271">
    <property type="entry name" value="Ribosomal_uS14_CS"/>
</dbReference>
<dbReference type="InterPro" id="IPR043140">
    <property type="entry name" value="Ribosomal_uS14_sf"/>
</dbReference>
<dbReference type="NCBIfam" id="NF005974">
    <property type="entry name" value="PRK08061.1"/>
    <property type="match status" value="1"/>
</dbReference>
<dbReference type="PANTHER" id="PTHR19836">
    <property type="entry name" value="30S RIBOSOMAL PROTEIN S14"/>
    <property type="match status" value="1"/>
</dbReference>
<dbReference type="PANTHER" id="PTHR19836:SF19">
    <property type="entry name" value="SMALL RIBOSOMAL SUBUNIT PROTEIN US14M"/>
    <property type="match status" value="1"/>
</dbReference>
<dbReference type="Pfam" id="PF00253">
    <property type="entry name" value="Ribosomal_S14"/>
    <property type="match status" value="1"/>
</dbReference>
<dbReference type="SUPFAM" id="SSF57716">
    <property type="entry name" value="Glucocorticoid receptor-like (DNA-binding domain)"/>
    <property type="match status" value="1"/>
</dbReference>
<dbReference type="PROSITE" id="PS00527">
    <property type="entry name" value="RIBOSOMAL_S14"/>
    <property type="match status" value="1"/>
</dbReference>